<gene>
    <name type="primary">Thtpa</name>
</gene>
<comment type="function">
    <text evidence="4">Hydrolase highly specific for thiamine triphosphate (ThTP).</text>
</comment>
<comment type="catalytic activity">
    <reaction evidence="4">
        <text>thiamine triphosphate + H2O = thiamine diphosphate + phosphate + H(+)</text>
        <dbReference type="Rhea" id="RHEA:11744"/>
        <dbReference type="ChEBI" id="CHEBI:15377"/>
        <dbReference type="ChEBI" id="CHEBI:15378"/>
        <dbReference type="ChEBI" id="CHEBI:43474"/>
        <dbReference type="ChEBI" id="CHEBI:58937"/>
        <dbReference type="ChEBI" id="CHEBI:58938"/>
        <dbReference type="EC" id="3.6.1.28"/>
    </reaction>
</comment>
<comment type="cofactor">
    <cofactor evidence="4">
        <name>Mg(2+)</name>
        <dbReference type="ChEBI" id="CHEBI:18420"/>
    </cofactor>
    <text evidence="4">Binds 1 Mg(2+) ion per subunit.</text>
</comment>
<comment type="biophysicochemical properties">
    <phDependence>
        <text evidence="4">Optimum pH is 7.5-9.5.</text>
    </phDependence>
</comment>
<comment type="subunit">
    <text evidence="4">Monomer.</text>
</comment>
<comment type="subcellular location">
    <subcellularLocation>
        <location evidence="1">Cytoplasm</location>
    </subcellularLocation>
</comment>
<comment type="similarity">
    <text evidence="5">Belongs to the ThTPase family.</text>
</comment>
<dbReference type="EC" id="3.6.1.28"/>
<dbReference type="EMBL" id="AF432864">
    <property type="protein sequence ID" value="AAM22405.1"/>
    <property type="molecule type" value="mRNA"/>
</dbReference>
<dbReference type="EMBL" id="AK132479">
    <property type="protein sequence ID" value="BAE21189.1"/>
    <property type="molecule type" value="mRNA"/>
</dbReference>
<dbReference type="EMBL" id="BC025562">
    <property type="protein sequence ID" value="AAH25562.1"/>
    <property type="molecule type" value="mRNA"/>
</dbReference>
<dbReference type="CCDS" id="CCDS27108.1"/>
<dbReference type="RefSeq" id="NP_694723.1">
    <property type="nucleotide sequence ID" value="NM_153083.5"/>
</dbReference>
<dbReference type="PDB" id="2JMU">
    <property type="method" value="NMR"/>
    <property type="chains" value="A=2-224"/>
</dbReference>
<dbReference type="PDB" id="5A64">
    <property type="method" value="X-ray"/>
    <property type="resolution" value="2.10 A"/>
    <property type="chains" value="A/B=1-224"/>
</dbReference>
<dbReference type="PDB" id="5A65">
    <property type="method" value="X-ray"/>
    <property type="resolution" value="1.98 A"/>
    <property type="chains" value="A/B=3-215"/>
</dbReference>
<dbReference type="PDBsum" id="2JMU"/>
<dbReference type="PDBsum" id="5A64"/>
<dbReference type="PDBsum" id="5A65"/>
<dbReference type="BMRB" id="Q8JZL3"/>
<dbReference type="SMR" id="Q8JZL3"/>
<dbReference type="FunCoup" id="Q8JZL3">
    <property type="interactions" value="335"/>
</dbReference>
<dbReference type="STRING" id="10090.ENSMUSP00000056026"/>
<dbReference type="PhosphoSitePlus" id="Q8JZL3"/>
<dbReference type="jPOST" id="Q8JZL3"/>
<dbReference type="PaxDb" id="10090-ENSMUSP00000056026"/>
<dbReference type="PeptideAtlas" id="Q8JZL3"/>
<dbReference type="ProteomicsDB" id="259186"/>
<dbReference type="Pumba" id="Q8JZL3"/>
<dbReference type="Antibodypedia" id="55506">
    <property type="antibodies" value="225 antibodies from 22 providers"/>
</dbReference>
<dbReference type="DNASU" id="105663"/>
<dbReference type="Ensembl" id="ENSMUST00000050575.9">
    <property type="protein sequence ID" value="ENSMUSP00000056026.8"/>
    <property type="gene ID" value="ENSMUSG00000045691.15"/>
</dbReference>
<dbReference type="GeneID" id="105663"/>
<dbReference type="KEGG" id="mmu:105663"/>
<dbReference type="UCSC" id="uc007tyb.2">
    <property type="organism name" value="mouse"/>
</dbReference>
<dbReference type="AGR" id="MGI:2446078"/>
<dbReference type="CTD" id="79178"/>
<dbReference type="MGI" id="MGI:2446078">
    <property type="gene designation" value="Thtpa"/>
</dbReference>
<dbReference type="VEuPathDB" id="HostDB:ENSMUSG00000045691"/>
<dbReference type="eggNOG" id="ENOG502S5G9">
    <property type="taxonomic scope" value="Eukaryota"/>
</dbReference>
<dbReference type="GeneTree" id="ENSGT00390000005996"/>
<dbReference type="HOGENOM" id="CLU_105907_0_0_1"/>
<dbReference type="InParanoid" id="Q8JZL3"/>
<dbReference type="OMA" id="HWLRHRE"/>
<dbReference type="OrthoDB" id="442176at2759"/>
<dbReference type="PhylomeDB" id="Q8JZL3"/>
<dbReference type="TreeFam" id="TF333398"/>
<dbReference type="BRENDA" id="3.6.1.28">
    <property type="organism ID" value="3474"/>
</dbReference>
<dbReference type="Reactome" id="R-MMU-196819">
    <property type="pathway name" value="Vitamin B1 (thiamin) metabolism"/>
</dbReference>
<dbReference type="SABIO-RK" id="Q8JZL3"/>
<dbReference type="BioGRID-ORCS" id="105663">
    <property type="hits" value="0 hits in 76 CRISPR screens"/>
</dbReference>
<dbReference type="ChiTaRS" id="Thtpa">
    <property type="organism name" value="mouse"/>
</dbReference>
<dbReference type="EvolutionaryTrace" id="Q8JZL3"/>
<dbReference type="PRO" id="PR:Q8JZL3"/>
<dbReference type="Proteomes" id="UP000000589">
    <property type="component" value="Chromosome 14"/>
</dbReference>
<dbReference type="RNAct" id="Q8JZL3">
    <property type="molecule type" value="protein"/>
</dbReference>
<dbReference type="Bgee" id="ENSMUSG00000045691">
    <property type="expression patterns" value="Expressed in ganglionic eminence and 77 other cell types or tissues"/>
</dbReference>
<dbReference type="GO" id="GO:0005829">
    <property type="term" value="C:cytosol"/>
    <property type="evidence" value="ECO:0000314"/>
    <property type="project" value="MGI"/>
</dbReference>
<dbReference type="GO" id="GO:0000287">
    <property type="term" value="F:magnesium ion binding"/>
    <property type="evidence" value="ECO:0000314"/>
    <property type="project" value="UniProtKB"/>
</dbReference>
<dbReference type="GO" id="GO:0050333">
    <property type="term" value="F:thiamine triphosphate phosphatase activity"/>
    <property type="evidence" value="ECO:0000314"/>
    <property type="project" value="UniProtKB"/>
</dbReference>
<dbReference type="GO" id="GO:0009229">
    <property type="term" value="P:thiamine diphosphate biosynthetic process"/>
    <property type="evidence" value="ECO:0000314"/>
    <property type="project" value="MGI"/>
</dbReference>
<dbReference type="GO" id="GO:0042357">
    <property type="term" value="P:thiamine diphosphate metabolic process"/>
    <property type="evidence" value="ECO:0000314"/>
    <property type="project" value="UniProtKB"/>
</dbReference>
<dbReference type="GO" id="GO:0006772">
    <property type="term" value="P:thiamine metabolic process"/>
    <property type="evidence" value="ECO:0007669"/>
    <property type="project" value="InterPro"/>
</dbReference>
<dbReference type="CDD" id="cd07758">
    <property type="entry name" value="ThTPase"/>
    <property type="match status" value="1"/>
</dbReference>
<dbReference type="FunFam" id="2.40.320.10:FF:000005">
    <property type="entry name" value="Thiamine-triphosphatase"/>
    <property type="match status" value="1"/>
</dbReference>
<dbReference type="Gene3D" id="2.40.320.10">
    <property type="entry name" value="Hypothetical Protein Pfu-838710-001"/>
    <property type="match status" value="1"/>
</dbReference>
<dbReference type="InterPro" id="IPR033469">
    <property type="entry name" value="CYTH-like_dom_sf"/>
</dbReference>
<dbReference type="InterPro" id="IPR023577">
    <property type="entry name" value="CYTH_domain"/>
</dbReference>
<dbReference type="InterPro" id="IPR039582">
    <property type="entry name" value="THTPA"/>
</dbReference>
<dbReference type="InterPro" id="IPR012177">
    <property type="entry name" value="ThTPase_euk"/>
</dbReference>
<dbReference type="PANTHER" id="PTHR14586">
    <property type="entry name" value="THIAMINE-TRIPHOSPHATASE"/>
    <property type="match status" value="1"/>
</dbReference>
<dbReference type="PANTHER" id="PTHR14586:SF1">
    <property type="entry name" value="THIAMINE-TRIPHOSPHATASE"/>
    <property type="match status" value="1"/>
</dbReference>
<dbReference type="Pfam" id="PF01928">
    <property type="entry name" value="CYTH"/>
    <property type="match status" value="1"/>
</dbReference>
<dbReference type="PIRSF" id="PIRSF036561">
    <property type="entry name" value="ThTPase"/>
    <property type="match status" value="1"/>
</dbReference>
<dbReference type="SMART" id="SM01118">
    <property type="entry name" value="CYTH"/>
    <property type="match status" value="1"/>
</dbReference>
<dbReference type="SUPFAM" id="SSF55154">
    <property type="entry name" value="CYTH-like phosphatases"/>
    <property type="match status" value="1"/>
</dbReference>
<dbReference type="PROSITE" id="PS51707">
    <property type="entry name" value="CYTH"/>
    <property type="match status" value="1"/>
</dbReference>
<protein>
    <recommendedName>
        <fullName>Thiamine-triphosphatase</fullName>
        <shortName>ThTPase</shortName>
        <ecNumber>3.6.1.28</ecNumber>
    </recommendedName>
</protein>
<reference key="1">
    <citation type="submission" date="2001-10" db="EMBL/GenBank/DDBJ databases">
        <title>Cloning and expression of mouse thiamine triphosphatase cDNA.</title>
        <authorList>
            <person name="Lakaye B."/>
            <person name="Coumans B."/>
            <person name="Makarchikov A."/>
            <person name="Grisar T."/>
            <person name="Bettendorff L."/>
        </authorList>
    </citation>
    <scope>NUCLEOTIDE SEQUENCE [MRNA]</scope>
    <source>
        <strain>C57BL/6J</strain>
    </source>
</reference>
<reference key="2">
    <citation type="journal article" date="2005" name="Science">
        <title>The transcriptional landscape of the mammalian genome.</title>
        <authorList>
            <person name="Carninci P."/>
            <person name="Kasukawa T."/>
            <person name="Katayama S."/>
            <person name="Gough J."/>
            <person name="Frith M.C."/>
            <person name="Maeda N."/>
            <person name="Oyama R."/>
            <person name="Ravasi T."/>
            <person name="Lenhard B."/>
            <person name="Wells C."/>
            <person name="Kodzius R."/>
            <person name="Shimokawa K."/>
            <person name="Bajic V.B."/>
            <person name="Brenner S.E."/>
            <person name="Batalov S."/>
            <person name="Forrest A.R."/>
            <person name="Zavolan M."/>
            <person name="Davis M.J."/>
            <person name="Wilming L.G."/>
            <person name="Aidinis V."/>
            <person name="Allen J.E."/>
            <person name="Ambesi-Impiombato A."/>
            <person name="Apweiler R."/>
            <person name="Aturaliya R.N."/>
            <person name="Bailey T.L."/>
            <person name="Bansal M."/>
            <person name="Baxter L."/>
            <person name="Beisel K.W."/>
            <person name="Bersano T."/>
            <person name="Bono H."/>
            <person name="Chalk A.M."/>
            <person name="Chiu K.P."/>
            <person name="Choudhary V."/>
            <person name="Christoffels A."/>
            <person name="Clutterbuck D.R."/>
            <person name="Crowe M.L."/>
            <person name="Dalla E."/>
            <person name="Dalrymple B.P."/>
            <person name="de Bono B."/>
            <person name="Della Gatta G."/>
            <person name="di Bernardo D."/>
            <person name="Down T."/>
            <person name="Engstrom P."/>
            <person name="Fagiolini M."/>
            <person name="Faulkner G."/>
            <person name="Fletcher C.F."/>
            <person name="Fukushima T."/>
            <person name="Furuno M."/>
            <person name="Futaki S."/>
            <person name="Gariboldi M."/>
            <person name="Georgii-Hemming P."/>
            <person name="Gingeras T.R."/>
            <person name="Gojobori T."/>
            <person name="Green R.E."/>
            <person name="Gustincich S."/>
            <person name="Harbers M."/>
            <person name="Hayashi Y."/>
            <person name="Hensch T.K."/>
            <person name="Hirokawa N."/>
            <person name="Hill D."/>
            <person name="Huminiecki L."/>
            <person name="Iacono M."/>
            <person name="Ikeo K."/>
            <person name="Iwama A."/>
            <person name="Ishikawa T."/>
            <person name="Jakt M."/>
            <person name="Kanapin A."/>
            <person name="Katoh M."/>
            <person name="Kawasawa Y."/>
            <person name="Kelso J."/>
            <person name="Kitamura H."/>
            <person name="Kitano H."/>
            <person name="Kollias G."/>
            <person name="Krishnan S.P."/>
            <person name="Kruger A."/>
            <person name="Kummerfeld S.K."/>
            <person name="Kurochkin I.V."/>
            <person name="Lareau L.F."/>
            <person name="Lazarevic D."/>
            <person name="Lipovich L."/>
            <person name="Liu J."/>
            <person name="Liuni S."/>
            <person name="McWilliam S."/>
            <person name="Madan Babu M."/>
            <person name="Madera M."/>
            <person name="Marchionni L."/>
            <person name="Matsuda H."/>
            <person name="Matsuzawa S."/>
            <person name="Miki H."/>
            <person name="Mignone F."/>
            <person name="Miyake S."/>
            <person name="Morris K."/>
            <person name="Mottagui-Tabar S."/>
            <person name="Mulder N."/>
            <person name="Nakano N."/>
            <person name="Nakauchi H."/>
            <person name="Ng P."/>
            <person name="Nilsson R."/>
            <person name="Nishiguchi S."/>
            <person name="Nishikawa S."/>
            <person name="Nori F."/>
            <person name="Ohara O."/>
            <person name="Okazaki Y."/>
            <person name="Orlando V."/>
            <person name="Pang K.C."/>
            <person name="Pavan W.J."/>
            <person name="Pavesi G."/>
            <person name="Pesole G."/>
            <person name="Petrovsky N."/>
            <person name="Piazza S."/>
            <person name="Reed J."/>
            <person name="Reid J.F."/>
            <person name="Ring B.Z."/>
            <person name="Ringwald M."/>
            <person name="Rost B."/>
            <person name="Ruan Y."/>
            <person name="Salzberg S.L."/>
            <person name="Sandelin A."/>
            <person name="Schneider C."/>
            <person name="Schoenbach C."/>
            <person name="Sekiguchi K."/>
            <person name="Semple C.A."/>
            <person name="Seno S."/>
            <person name="Sessa L."/>
            <person name="Sheng Y."/>
            <person name="Shibata Y."/>
            <person name="Shimada H."/>
            <person name="Shimada K."/>
            <person name="Silva D."/>
            <person name="Sinclair B."/>
            <person name="Sperling S."/>
            <person name="Stupka E."/>
            <person name="Sugiura K."/>
            <person name="Sultana R."/>
            <person name="Takenaka Y."/>
            <person name="Taki K."/>
            <person name="Tammoja K."/>
            <person name="Tan S.L."/>
            <person name="Tang S."/>
            <person name="Taylor M.S."/>
            <person name="Tegner J."/>
            <person name="Teichmann S.A."/>
            <person name="Ueda H.R."/>
            <person name="van Nimwegen E."/>
            <person name="Verardo R."/>
            <person name="Wei C.L."/>
            <person name="Yagi K."/>
            <person name="Yamanishi H."/>
            <person name="Zabarovsky E."/>
            <person name="Zhu S."/>
            <person name="Zimmer A."/>
            <person name="Hide W."/>
            <person name="Bult C."/>
            <person name="Grimmond S.M."/>
            <person name="Teasdale R.D."/>
            <person name="Liu E.T."/>
            <person name="Brusic V."/>
            <person name="Quackenbush J."/>
            <person name="Wahlestedt C."/>
            <person name="Mattick J.S."/>
            <person name="Hume D.A."/>
            <person name="Kai C."/>
            <person name="Sasaki D."/>
            <person name="Tomaru Y."/>
            <person name="Fukuda S."/>
            <person name="Kanamori-Katayama M."/>
            <person name="Suzuki M."/>
            <person name="Aoki J."/>
            <person name="Arakawa T."/>
            <person name="Iida J."/>
            <person name="Imamura K."/>
            <person name="Itoh M."/>
            <person name="Kato T."/>
            <person name="Kawaji H."/>
            <person name="Kawagashira N."/>
            <person name="Kawashima T."/>
            <person name="Kojima M."/>
            <person name="Kondo S."/>
            <person name="Konno H."/>
            <person name="Nakano K."/>
            <person name="Ninomiya N."/>
            <person name="Nishio T."/>
            <person name="Okada M."/>
            <person name="Plessy C."/>
            <person name="Shibata K."/>
            <person name="Shiraki T."/>
            <person name="Suzuki S."/>
            <person name="Tagami M."/>
            <person name="Waki K."/>
            <person name="Watahiki A."/>
            <person name="Okamura-Oho Y."/>
            <person name="Suzuki H."/>
            <person name="Kawai J."/>
            <person name="Hayashizaki Y."/>
        </authorList>
    </citation>
    <scope>NUCLEOTIDE SEQUENCE [LARGE SCALE MRNA]</scope>
    <source>
        <strain>C57BL/6J</strain>
        <tissue>Skin</tissue>
    </source>
</reference>
<reference key="3">
    <citation type="journal article" date="2004" name="Genome Res.">
        <title>The status, quality, and expansion of the NIH full-length cDNA project: the Mammalian Gene Collection (MGC).</title>
        <authorList>
            <consortium name="The MGC Project Team"/>
        </authorList>
    </citation>
    <scope>NUCLEOTIDE SEQUENCE [LARGE SCALE MRNA]</scope>
    <source>
        <strain>FVB/N</strain>
        <tissue>Mammary gland</tissue>
    </source>
</reference>
<reference key="4">
    <citation type="journal article" date="2010" name="Cell">
        <title>A tissue-specific atlas of mouse protein phosphorylation and expression.</title>
        <authorList>
            <person name="Huttlin E.L."/>
            <person name="Jedrychowski M.P."/>
            <person name="Elias J.E."/>
            <person name="Goswami T."/>
            <person name="Rad R."/>
            <person name="Beausoleil S.A."/>
            <person name="Villen J."/>
            <person name="Haas W."/>
            <person name="Sowa M.E."/>
            <person name="Gygi S.P."/>
        </authorList>
    </citation>
    <scope>IDENTIFICATION BY MASS SPECTROMETRY [LARGE SCALE ANALYSIS]</scope>
    <source>
        <tissue>Brain</tissue>
        <tissue>Heart</tissue>
        <tissue>Kidney</tissue>
        <tissue>Liver</tissue>
        <tissue>Lung</tissue>
    </source>
</reference>
<reference key="5">
    <citation type="journal article" date="2008" name="J. Biol. Chem.">
        <title>Structural basis for the catalytic mechanism of mammalian 25-kDa thiamine triphosphatase.</title>
        <authorList>
            <person name="Song J."/>
            <person name="Bettendorff L."/>
            <person name="Tonelli M."/>
            <person name="Markley J.L."/>
        </authorList>
    </citation>
    <scope>STRUCTURE BY NMR OF 2-223</scope>
    <scope>SUBUNIT</scope>
    <scope>MAGNESIUM-BINDING SITES</scope>
    <scope>SUBSTRATE-BINDING SITES</scope>
    <scope>CATALYTIC ACTIVITY</scope>
    <scope>FUNCTION</scope>
    <scope>COFACTOR</scope>
    <scope>BIOPHYSICOCHEMICAL PROPERTIES</scope>
</reference>
<accession>Q8JZL3</accession>
<accession>Q3V1G2</accession>
<accession>Q8C3P9</accession>
<keyword id="KW-0002">3D-structure</keyword>
<keyword id="KW-0007">Acetylation</keyword>
<keyword id="KW-0963">Cytoplasm</keyword>
<keyword id="KW-0378">Hydrolase</keyword>
<keyword id="KW-0460">Magnesium</keyword>
<keyword id="KW-0479">Metal-binding</keyword>
<keyword id="KW-1185">Reference proteome</keyword>
<sequence>MAQGLIEVERKFAPGPDTEERLQELGATLEHRVTFRDTYYDTSELSLMLSDHWLRQREGSGWELKCPGVTGVSGPHNEYVEVTSEAAIVAQLFELLGSGEQKPAGVAAVLGSLKLQEVASFITTRSSWKLALSGAHGQEPQLTIDLDSADFGYAVGEVEAMVHEKAEVPAALEKIITVSSMLGVPAQEEAPAKLMVYLQRFRPLDYQRLLEAASSGEATGDSAS</sequence>
<organism>
    <name type="scientific">Mus musculus</name>
    <name type="common">Mouse</name>
    <dbReference type="NCBI Taxonomy" id="10090"/>
    <lineage>
        <taxon>Eukaryota</taxon>
        <taxon>Metazoa</taxon>
        <taxon>Chordata</taxon>
        <taxon>Craniata</taxon>
        <taxon>Vertebrata</taxon>
        <taxon>Euteleostomi</taxon>
        <taxon>Mammalia</taxon>
        <taxon>Eutheria</taxon>
        <taxon>Euarchontoglires</taxon>
        <taxon>Glires</taxon>
        <taxon>Rodentia</taxon>
        <taxon>Myomorpha</taxon>
        <taxon>Muroidea</taxon>
        <taxon>Muridae</taxon>
        <taxon>Murinae</taxon>
        <taxon>Mus</taxon>
        <taxon>Mus</taxon>
    </lineage>
</organism>
<name>THTPA_MOUSE</name>
<proteinExistence type="evidence at protein level"/>
<evidence type="ECO:0000250" key="1"/>
<evidence type="ECO:0000250" key="2">
    <source>
        <dbReference type="UniProtKB" id="Q8MKF1"/>
    </source>
</evidence>
<evidence type="ECO:0000255" key="3">
    <source>
        <dbReference type="PROSITE-ProRule" id="PRU01044"/>
    </source>
</evidence>
<evidence type="ECO:0000269" key="4">
    <source>
    </source>
</evidence>
<evidence type="ECO:0000305" key="5"/>
<evidence type="ECO:0007829" key="6">
    <source>
        <dbReference type="PDB" id="2JMU"/>
    </source>
</evidence>
<evidence type="ECO:0007829" key="7">
    <source>
        <dbReference type="PDB" id="5A65"/>
    </source>
</evidence>
<feature type="initiator methionine" description="Removed" evidence="2">
    <location>
        <position position="1"/>
    </location>
</feature>
<feature type="chain" id="PRO_0000221492" description="Thiamine-triphosphatase">
    <location>
        <begin position="2"/>
        <end position="224"/>
    </location>
</feature>
<feature type="domain" description="CYTH" evidence="3">
    <location>
        <begin position="5"/>
        <end position="201"/>
    </location>
</feature>
<feature type="binding site">
    <location>
        <position position="7"/>
    </location>
    <ligand>
        <name>Mg(2+)</name>
        <dbReference type="ChEBI" id="CHEBI:18420"/>
    </ligand>
</feature>
<feature type="binding site">
    <location>
        <position position="9"/>
    </location>
    <ligand>
        <name>Mg(2+)</name>
        <dbReference type="ChEBI" id="CHEBI:18420"/>
    </ligand>
</feature>
<feature type="binding site">
    <location>
        <position position="11"/>
    </location>
    <ligand>
        <name>substrate</name>
    </ligand>
</feature>
<feature type="binding site">
    <location>
        <position position="55"/>
    </location>
    <ligand>
        <name>substrate</name>
    </ligand>
</feature>
<feature type="binding site">
    <location>
        <position position="57"/>
    </location>
    <ligand>
        <name>substrate</name>
    </ligand>
</feature>
<feature type="binding site">
    <location>
        <position position="65"/>
    </location>
    <ligand>
        <name>substrate</name>
    </ligand>
</feature>
<feature type="binding site">
    <location>
        <position position="125"/>
    </location>
    <ligand>
        <name>substrate</name>
    </ligand>
</feature>
<feature type="binding site">
    <location>
        <position position="145"/>
    </location>
    <ligand>
        <name>Mg(2+)</name>
        <dbReference type="ChEBI" id="CHEBI:18420"/>
    </ligand>
</feature>
<feature type="binding site">
    <location>
        <position position="157"/>
    </location>
    <ligand>
        <name>Mg(2+)</name>
        <dbReference type="ChEBI" id="CHEBI:18420"/>
    </ligand>
</feature>
<feature type="binding site" evidence="1">
    <location>
        <position position="157"/>
    </location>
    <ligand>
        <name>substrate</name>
    </ligand>
</feature>
<feature type="binding site">
    <location>
        <position position="159"/>
    </location>
    <ligand>
        <name>Mg(2+)</name>
        <dbReference type="ChEBI" id="CHEBI:18420"/>
    </ligand>
</feature>
<feature type="binding site">
    <location>
        <position position="193"/>
    </location>
    <ligand>
        <name>substrate</name>
    </ligand>
</feature>
<feature type="modified residue" description="N-acetylalanine" evidence="2">
    <location>
        <position position="2"/>
    </location>
</feature>
<feature type="strand" evidence="7">
    <location>
        <begin position="6"/>
        <end position="12"/>
    </location>
</feature>
<feature type="helix" evidence="7">
    <location>
        <begin position="18"/>
        <end position="24"/>
    </location>
</feature>
<feature type="strand" evidence="7">
    <location>
        <begin position="28"/>
        <end position="41"/>
    </location>
</feature>
<feature type="helix" evidence="7">
    <location>
        <begin position="46"/>
        <end position="49"/>
    </location>
</feature>
<feature type="strand" evidence="7">
    <location>
        <begin position="53"/>
        <end position="57"/>
    </location>
</feature>
<feature type="turn" evidence="7">
    <location>
        <begin position="58"/>
        <end position="60"/>
    </location>
</feature>
<feature type="strand" evidence="7">
    <location>
        <begin position="61"/>
        <end position="67"/>
    </location>
</feature>
<feature type="strand" evidence="7">
    <location>
        <begin position="79"/>
        <end position="82"/>
    </location>
</feature>
<feature type="helix" evidence="7">
    <location>
        <begin position="85"/>
        <end position="96"/>
    </location>
</feature>
<feature type="helix" evidence="7">
    <location>
        <begin position="106"/>
        <end position="109"/>
    </location>
</feature>
<feature type="helix" evidence="7">
    <location>
        <begin position="111"/>
        <end position="113"/>
    </location>
</feature>
<feature type="strand" evidence="7">
    <location>
        <begin position="116"/>
        <end position="130"/>
    </location>
</feature>
<feature type="strand" evidence="7">
    <location>
        <begin position="142"/>
        <end position="149"/>
    </location>
</feature>
<feature type="turn" evidence="7">
    <location>
        <begin position="150"/>
        <end position="152"/>
    </location>
</feature>
<feature type="strand" evidence="7">
    <location>
        <begin position="153"/>
        <end position="164"/>
    </location>
</feature>
<feature type="helix" evidence="7">
    <location>
        <begin position="165"/>
        <end position="167"/>
    </location>
</feature>
<feature type="helix" evidence="7">
    <location>
        <begin position="168"/>
        <end position="182"/>
    </location>
</feature>
<feature type="strand" evidence="6">
    <location>
        <begin position="183"/>
        <end position="185"/>
    </location>
</feature>
<feature type="helix" evidence="7">
    <location>
        <begin position="193"/>
        <end position="201"/>
    </location>
</feature>
<feature type="helix" evidence="7">
    <location>
        <begin position="203"/>
        <end position="213"/>
    </location>
</feature>